<comment type="catalytic activity">
    <reaction evidence="1">
        <text>L-citrulline + L-aspartate + ATP = 2-(N(omega)-L-arginino)succinate + AMP + diphosphate + H(+)</text>
        <dbReference type="Rhea" id="RHEA:10932"/>
        <dbReference type="ChEBI" id="CHEBI:15378"/>
        <dbReference type="ChEBI" id="CHEBI:29991"/>
        <dbReference type="ChEBI" id="CHEBI:30616"/>
        <dbReference type="ChEBI" id="CHEBI:33019"/>
        <dbReference type="ChEBI" id="CHEBI:57472"/>
        <dbReference type="ChEBI" id="CHEBI:57743"/>
        <dbReference type="ChEBI" id="CHEBI:456215"/>
        <dbReference type="EC" id="6.3.4.5"/>
    </reaction>
</comment>
<comment type="pathway">
    <text evidence="1">Amino-acid biosynthesis; L-arginine biosynthesis; L-arginine from L-ornithine and carbamoyl phosphate: step 2/3.</text>
</comment>
<comment type="subunit">
    <text evidence="1">Homotetramer.</text>
</comment>
<comment type="subcellular location">
    <subcellularLocation>
        <location evidence="1">Cytoplasm</location>
    </subcellularLocation>
</comment>
<comment type="similarity">
    <text evidence="1">Belongs to the argininosuccinate synthase family. Type 2 subfamily.</text>
</comment>
<feature type="chain" id="PRO_1000129748" description="Argininosuccinate synthase">
    <location>
        <begin position="1"/>
        <end position="447"/>
    </location>
</feature>
<feature type="binding site" evidence="1">
    <location>
        <begin position="17"/>
        <end position="25"/>
    </location>
    <ligand>
        <name>ATP</name>
        <dbReference type="ChEBI" id="CHEBI:30616"/>
    </ligand>
</feature>
<feature type="binding site" evidence="1">
    <location>
        <position position="43"/>
    </location>
    <ligand>
        <name>ATP</name>
        <dbReference type="ChEBI" id="CHEBI:30616"/>
    </ligand>
</feature>
<feature type="binding site" evidence="1">
    <location>
        <position position="99"/>
    </location>
    <ligand>
        <name>L-citrulline</name>
        <dbReference type="ChEBI" id="CHEBI:57743"/>
    </ligand>
</feature>
<feature type="binding site" evidence="1">
    <location>
        <position position="129"/>
    </location>
    <ligand>
        <name>ATP</name>
        <dbReference type="ChEBI" id="CHEBI:30616"/>
    </ligand>
</feature>
<feature type="binding site" evidence="1">
    <location>
        <position position="131"/>
    </location>
    <ligand>
        <name>ATP</name>
        <dbReference type="ChEBI" id="CHEBI:30616"/>
    </ligand>
</feature>
<feature type="binding site" evidence="1">
    <location>
        <position position="131"/>
    </location>
    <ligand>
        <name>L-aspartate</name>
        <dbReference type="ChEBI" id="CHEBI:29991"/>
    </ligand>
</feature>
<feature type="binding site" evidence="1">
    <location>
        <position position="135"/>
    </location>
    <ligand>
        <name>L-aspartate</name>
        <dbReference type="ChEBI" id="CHEBI:29991"/>
    </ligand>
</feature>
<feature type="binding site" evidence="1">
    <location>
        <position position="135"/>
    </location>
    <ligand>
        <name>L-citrulline</name>
        <dbReference type="ChEBI" id="CHEBI:57743"/>
    </ligand>
</feature>
<feature type="binding site" evidence="1">
    <location>
        <position position="136"/>
    </location>
    <ligand>
        <name>ATP</name>
        <dbReference type="ChEBI" id="CHEBI:30616"/>
    </ligand>
</feature>
<feature type="binding site" evidence="1">
    <location>
        <position position="136"/>
    </location>
    <ligand>
        <name>L-aspartate</name>
        <dbReference type="ChEBI" id="CHEBI:29991"/>
    </ligand>
</feature>
<feature type="binding site" evidence="1">
    <location>
        <position position="139"/>
    </location>
    <ligand>
        <name>L-citrulline</name>
        <dbReference type="ChEBI" id="CHEBI:57743"/>
    </ligand>
</feature>
<feature type="binding site" evidence="1">
    <location>
        <position position="192"/>
    </location>
    <ligand>
        <name>L-citrulline</name>
        <dbReference type="ChEBI" id="CHEBI:57743"/>
    </ligand>
</feature>
<feature type="binding site" evidence="1">
    <location>
        <position position="194"/>
    </location>
    <ligand>
        <name>ATP</name>
        <dbReference type="ChEBI" id="CHEBI:30616"/>
    </ligand>
</feature>
<feature type="binding site" evidence="1">
    <location>
        <position position="201"/>
    </location>
    <ligand>
        <name>L-citrulline</name>
        <dbReference type="ChEBI" id="CHEBI:57743"/>
    </ligand>
</feature>
<feature type="binding site" evidence="1">
    <location>
        <position position="203"/>
    </location>
    <ligand>
        <name>L-citrulline</name>
        <dbReference type="ChEBI" id="CHEBI:57743"/>
    </ligand>
</feature>
<feature type="binding site" evidence="1">
    <location>
        <position position="280"/>
    </location>
    <ligand>
        <name>L-citrulline</name>
        <dbReference type="ChEBI" id="CHEBI:57743"/>
    </ligand>
</feature>
<proteinExistence type="inferred from homology"/>
<dbReference type="EC" id="6.3.4.5" evidence="1"/>
<dbReference type="EMBL" id="CU928160">
    <property type="protein sequence ID" value="CAR00135.1"/>
    <property type="molecule type" value="Genomic_DNA"/>
</dbReference>
<dbReference type="RefSeq" id="WP_000207683.1">
    <property type="nucleotide sequence ID" value="NC_011741.1"/>
</dbReference>
<dbReference type="SMR" id="B7M079"/>
<dbReference type="GeneID" id="93778809"/>
<dbReference type="KEGG" id="ecr:ECIAI1_3321"/>
<dbReference type="HOGENOM" id="CLU_032784_4_1_6"/>
<dbReference type="UniPathway" id="UPA00068">
    <property type="reaction ID" value="UER00113"/>
</dbReference>
<dbReference type="GO" id="GO:0005737">
    <property type="term" value="C:cytoplasm"/>
    <property type="evidence" value="ECO:0007669"/>
    <property type="project" value="UniProtKB-SubCell"/>
</dbReference>
<dbReference type="GO" id="GO:0004055">
    <property type="term" value="F:argininosuccinate synthase activity"/>
    <property type="evidence" value="ECO:0007669"/>
    <property type="project" value="UniProtKB-UniRule"/>
</dbReference>
<dbReference type="GO" id="GO:0005524">
    <property type="term" value="F:ATP binding"/>
    <property type="evidence" value="ECO:0007669"/>
    <property type="project" value="UniProtKB-UniRule"/>
</dbReference>
<dbReference type="GO" id="GO:0042803">
    <property type="term" value="F:protein homodimerization activity"/>
    <property type="evidence" value="ECO:0007669"/>
    <property type="project" value="InterPro"/>
</dbReference>
<dbReference type="GO" id="GO:0000053">
    <property type="term" value="P:argininosuccinate metabolic process"/>
    <property type="evidence" value="ECO:0007669"/>
    <property type="project" value="TreeGrafter"/>
</dbReference>
<dbReference type="GO" id="GO:0006526">
    <property type="term" value="P:L-arginine biosynthetic process"/>
    <property type="evidence" value="ECO:0007669"/>
    <property type="project" value="UniProtKB-UniRule"/>
</dbReference>
<dbReference type="GO" id="GO:0000050">
    <property type="term" value="P:urea cycle"/>
    <property type="evidence" value="ECO:0007669"/>
    <property type="project" value="TreeGrafter"/>
</dbReference>
<dbReference type="CDD" id="cd01999">
    <property type="entry name" value="ASS"/>
    <property type="match status" value="1"/>
</dbReference>
<dbReference type="FunFam" id="1.10.287.400:FF:000001">
    <property type="entry name" value="Argininosuccinate synthase"/>
    <property type="match status" value="1"/>
</dbReference>
<dbReference type="Gene3D" id="1.10.287.400">
    <property type="match status" value="1"/>
</dbReference>
<dbReference type="Gene3D" id="3.90.1260.10">
    <property type="entry name" value="Argininosuccinate synthetase, chain A, domain 2"/>
    <property type="match status" value="1"/>
</dbReference>
<dbReference type="Gene3D" id="3.40.50.620">
    <property type="entry name" value="HUPs"/>
    <property type="match status" value="1"/>
</dbReference>
<dbReference type="HAMAP" id="MF_00581">
    <property type="entry name" value="Arg_succ_synth_type2"/>
    <property type="match status" value="1"/>
</dbReference>
<dbReference type="InterPro" id="IPR023437">
    <property type="entry name" value="Arg_succ_synth_type2_subfam"/>
</dbReference>
<dbReference type="InterPro" id="IPR048268">
    <property type="entry name" value="Arginosuc_syn_C"/>
</dbReference>
<dbReference type="InterPro" id="IPR048267">
    <property type="entry name" value="Arginosuc_syn_N"/>
</dbReference>
<dbReference type="InterPro" id="IPR001518">
    <property type="entry name" value="Arginosuc_synth"/>
</dbReference>
<dbReference type="InterPro" id="IPR018223">
    <property type="entry name" value="Arginosuc_synth_CS"/>
</dbReference>
<dbReference type="InterPro" id="IPR023434">
    <property type="entry name" value="Arginosuc_synth_type_1_subfam"/>
</dbReference>
<dbReference type="InterPro" id="IPR024074">
    <property type="entry name" value="AS_cat/multimer_dom_body"/>
</dbReference>
<dbReference type="InterPro" id="IPR024073">
    <property type="entry name" value="AS_multimer_C_tail"/>
</dbReference>
<dbReference type="InterPro" id="IPR014729">
    <property type="entry name" value="Rossmann-like_a/b/a_fold"/>
</dbReference>
<dbReference type="NCBIfam" id="TIGR00032">
    <property type="entry name" value="argG"/>
    <property type="match status" value="1"/>
</dbReference>
<dbReference type="NCBIfam" id="NF003779">
    <property type="entry name" value="PRK05370.1"/>
    <property type="match status" value="1"/>
</dbReference>
<dbReference type="PANTHER" id="PTHR11587">
    <property type="entry name" value="ARGININOSUCCINATE SYNTHASE"/>
    <property type="match status" value="1"/>
</dbReference>
<dbReference type="PANTHER" id="PTHR11587:SF2">
    <property type="entry name" value="ARGININOSUCCINATE SYNTHASE"/>
    <property type="match status" value="1"/>
</dbReference>
<dbReference type="Pfam" id="PF20979">
    <property type="entry name" value="Arginosuc_syn_C"/>
    <property type="match status" value="1"/>
</dbReference>
<dbReference type="Pfam" id="PF00764">
    <property type="entry name" value="Arginosuc_synth"/>
    <property type="match status" value="1"/>
</dbReference>
<dbReference type="SUPFAM" id="SSF52402">
    <property type="entry name" value="Adenine nucleotide alpha hydrolases-like"/>
    <property type="match status" value="1"/>
</dbReference>
<dbReference type="SUPFAM" id="SSF69864">
    <property type="entry name" value="Argininosuccinate synthetase, C-terminal domain"/>
    <property type="match status" value="1"/>
</dbReference>
<dbReference type="PROSITE" id="PS00564">
    <property type="entry name" value="ARGININOSUCCIN_SYN_1"/>
    <property type="match status" value="1"/>
</dbReference>
<dbReference type="PROSITE" id="PS00565">
    <property type="entry name" value="ARGININOSUCCIN_SYN_2"/>
    <property type="match status" value="1"/>
</dbReference>
<accession>B7M079</accession>
<name>ASSY_ECO8A</name>
<evidence type="ECO:0000255" key="1">
    <source>
        <dbReference type="HAMAP-Rule" id="MF_00581"/>
    </source>
</evidence>
<protein>
    <recommendedName>
        <fullName evidence="1">Argininosuccinate synthase</fullName>
        <ecNumber evidence="1">6.3.4.5</ecNumber>
    </recommendedName>
    <alternativeName>
        <fullName evidence="1">Citrulline--aspartate ligase</fullName>
    </alternativeName>
</protein>
<organism>
    <name type="scientific">Escherichia coli O8 (strain IAI1)</name>
    <dbReference type="NCBI Taxonomy" id="585034"/>
    <lineage>
        <taxon>Bacteria</taxon>
        <taxon>Pseudomonadati</taxon>
        <taxon>Pseudomonadota</taxon>
        <taxon>Gammaproteobacteria</taxon>
        <taxon>Enterobacterales</taxon>
        <taxon>Enterobacteriaceae</taxon>
        <taxon>Escherichia</taxon>
    </lineage>
</organism>
<sequence length="447" mass="49928">MTTILKHLPVGQRIGIAFSGGLDTSAALLWMRQKGAVPYAYTANLGQPDEEDYDAIPRRAMEYGAENARLIDCRKQLVAEGIAAIQCGAFHNTTGGLTYFNTTPLGRAVTGTMLVAAMKEDGVNIWGDGSTYKGNDIERFYRYGLLTNAELQIYKPWLDTDFIDELGGRHEMSEFMIACGFDYKMSVEKAYSTDSNMLGATHEAKDLEYLNSSVKIVNPIMGVKFWDESVKIPAEEVTVRFEQGHPVALNGKTFSDDVEMMLEANRIGGRHGLGMSDQIENRIIEAKSRGIYEAPGMALLHIAYERLLTGIHNEDTIEQYHAHGRQLGRLLYQGRWFDSQALMLRDSLQRWVASQITGEVTLELRRGNDYSILNTVSENLTYKPERLTMEKGDSVFSPDDRIGQLTMRNLDITDTREKLFGYAKTGLLSSSATSGVPQVENLENKGQ</sequence>
<reference key="1">
    <citation type="journal article" date="2009" name="PLoS Genet.">
        <title>Organised genome dynamics in the Escherichia coli species results in highly diverse adaptive paths.</title>
        <authorList>
            <person name="Touchon M."/>
            <person name="Hoede C."/>
            <person name="Tenaillon O."/>
            <person name="Barbe V."/>
            <person name="Baeriswyl S."/>
            <person name="Bidet P."/>
            <person name="Bingen E."/>
            <person name="Bonacorsi S."/>
            <person name="Bouchier C."/>
            <person name="Bouvet O."/>
            <person name="Calteau A."/>
            <person name="Chiapello H."/>
            <person name="Clermont O."/>
            <person name="Cruveiller S."/>
            <person name="Danchin A."/>
            <person name="Diard M."/>
            <person name="Dossat C."/>
            <person name="Karoui M.E."/>
            <person name="Frapy E."/>
            <person name="Garry L."/>
            <person name="Ghigo J.M."/>
            <person name="Gilles A.M."/>
            <person name="Johnson J."/>
            <person name="Le Bouguenec C."/>
            <person name="Lescat M."/>
            <person name="Mangenot S."/>
            <person name="Martinez-Jehanne V."/>
            <person name="Matic I."/>
            <person name="Nassif X."/>
            <person name="Oztas S."/>
            <person name="Petit M.A."/>
            <person name="Pichon C."/>
            <person name="Rouy Z."/>
            <person name="Ruf C.S."/>
            <person name="Schneider D."/>
            <person name="Tourret J."/>
            <person name="Vacherie B."/>
            <person name="Vallenet D."/>
            <person name="Medigue C."/>
            <person name="Rocha E.P.C."/>
            <person name="Denamur E."/>
        </authorList>
    </citation>
    <scope>NUCLEOTIDE SEQUENCE [LARGE SCALE GENOMIC DNA]</scope>
    <source>
        <strain>IAI1</strain>
    </source>
</reference>
<keyword id="KW-0028">Amino-acid biosynthesis</keyword>
<keyword id="KW-0055">Arginine biosynthesis</keyword>
<keyword id="KW-0067">ATP-binding</keyword>
<keyword id="KW-0963">Cytoplasm</keyword>
<keyword id="KW-0436">Ligase</keyword>
<keyword id="KW-0547">Nucleotide-binding</keyword>
<gene>
    <name evidence="1" type="primary">argG</name>
    <name type="ordered locus">ECIAI1_3321</name>
</gene>